<name>PSEI_CAMJJ</name>
<comment type="function">
    <text evidence="3">Catalyzes the fifth step in the biosynthesis of pseudaminic acid, a sialic-acid-like sugar that is used to modify flagellin. Catalyzes the condensation of phosphoenolpyruvate with 2,4-diacetamido-2,4,6-trideoxy-beta-l-altropyranose, forming pseudaminic acid.</text>
</comment>
<comment type="catalytic activity">
    <reaction>
        <text>2,4-diacetamido-2,4,6-trideoxy-beta-L-altrose + phosphoenolpyruvate + H2O = pseudaminate + phosphate</text>
        <dbReference type="Rhea" id="RHEA:31631"/>
        <dbReference type="ChEBI" id="CHEBI:15377"/>
        <dbReference type="ChEBI" id="CHEBI:43474"/>
        <dbReference type="ChEBI" id="CHEBI:58702"/>
        <dbReference type="ChEBI" id="CHEBI:63282"/>
        <dbReference type="ChEBI" id="CHEBI:63283"/>
        <dbReference type="EC" id="2.5.1.97"/>
    </reaction>
</comment>
<comment type="cofactor">
    <cofactor evidence="1">
        <name>a divalent metal cation</name>
        <dbReference type="ChEBI" id="CHEBI:60240"/>
    </cofactor>
</comment>
<comment type="similarity">
    <text evidence="4">Belongs to the pseudaminic acid synthase family.</text>
</comment>
<protein>
    <recommendedName>
        <fullName>Pseudaminic acid synthase</fullName>
        <ecNumber>2.5.1.97</ecNumber>
    </recommendedName>
    <alternativeName>
        <fullName>Pseudaminic acid biosynthesis protein I</fullName>
    </alternativeName>
</protein>
<feature type="chain" id="PRO_0000418935" description="Pseudaminic acid synthase">
    <location>
        <begin position="1"/>
        <end position="343"/>
    </location>
</feature>
<feature type="domain" description="AFP-like" evidence="2">
    <location>
        <begin position="287"/>
        <end position="343"/>
    </location>
</feature>
<sequence length="343" mass="38659">MQIGNFNTDKKVFIIAELSANHAGSLEMALKSIKAAKKAGADAIKIQTYTPDSLTLNSDKEDFIIKGGLWDKRKLYELYESAKTPYEWHSQIFETAQNEGILCFSSPFAKEDIEFLKRFDPIAYKIASFEANDENFVRLIAKEKKPTIVSTGIATEEELFKICEIFKEEKNPDLIFLKCTSAYPTAIEDMNLKGIVSLKEKFNVEVGLSDHSFGFLAPVMAVALGARVIEKHFMLDKSIESEDSKFSLDFDEFKAMVDAVRQAESALGDGKLDLDEKALKNRVFARSLYASKDIKKGEIFSEENVKSVRPSFGLHPKFYQELLGKKASKDIEFGDALKESDFR</sequence>
<accession>Q939J8</accession>
<organism>
    <name type="scientific">Campylobacter jejuni subsp. jejuni serotype O:23/36 (strain 81-176)</name>
    <dbReference type="NCBI Taxonomy" id="354242"/>
    <lineage>
        <taxon>Bacteria</taxon>
        <taxon>Pseudomonadati</taxon>
        <taxon>Campylobacterota</taxon>
        <taxon>Epsilonproteobacteria</taxon>
        <taxon>Campylobacterales</taxon>
        <taxon>Campylobacteraceae</taxon>
        <taxon>Campylobacter</taxon>
    </lineage>
</organism>
<evidence type="ECO:0000250" key="1"/>
<evidence type="ECO:0000255" key="2">
    <source>
        <dbReference type="PROSITE-ProRule" id="PRU00021"/>
    </source>
</evidence>
<evidence type="ECO:0000269" key="3">
    <source>
    </source>
</evidence>
<evidence type="ECO:0000305" key="4"/>
<dbReference type="EC" id="2.5.1.97"/>
<dbReference type="EMBL" id="AY102622">
    <property type="protein sequence ID" value="AAK58485.1"/>
    <property type="molecule type" value="Genomic_DNA"/>
</dbReference>
<dbReference type="EMBL" id="CP000538">
    <property type="protein sequence ID" value="EAQ72890.1"/>
    <property type="molecule type" value="Genomic_DNA"/>
</dbReference>
<dbReference type="RefSeq" id="WP_002855940.1">
    <property type="nucleotide sequence ID" value="NC_008787.1"/>
</dbReference>
<dbReference type="SMR" id="Q939J8"/>
<dbReference type="KEGG" id="cjj:CJJ81176_1334"/>
<dbReference type="eggNOG" id="COG2089">
    <property type="taxonomic scope" value="Bacteria"/>
</dbReference>
<dbReference type="HOGENOM" id="CLU_040465_0_1_7"/>
<dbReference type="Proteomes" id="UP000000646">
    <property type="component" value="Chromosome"/>
</dbReference>
<dbReference type="GO" id="GO:0046872">
    <property type="term" value="F:metal ion binding"/>
    <property type="evidence" value="ECO:0007669"/>
    <property type="project" value="UniProtKB-KW"/>
</dbReference>
<dbReference type="GO" id="GO:0047444">
    <property type="term" value="F:N-acylneuraminate-9-phosphate synthase activity"/>
    <property type="evidence" value="ECO:0007669"/>
    <property type="project" value="TreeGrafter"/>
</dbReference>
<dbReference type="GO" id="GO:0016051">
    <property type="term" value="P:carbohydrate biosynthetic process"/>
    <property type="evidence" value="ECO:0007669"/>
    <property type="project" value="InterPro"/>
</dbReference>
<dbReference type="GO" id="GO:0070085">
    <property type="term" value="P:glycosylation"/>
    <property type="evidence" value="ECO:0007669"/>
    <property type="project" value="TreeGrafter"/>
</dbReference>
<dbReference type="CDD" id="cd11615">
    <property type="entry name" value="SAF_NeuB_like"/>
    <property type="match status" value="1"/>
</dbReference>
<dbReference type="Gene3D" id="3.20.20.70">
    <property type="entry name" value="Aldolase class I"/>
    <property type="match status" value="1"/>
</dbReference>
<dbReference type="Gene3D" id="3.90.1210.10">
    <property type="entry name" value="Antifreeze-like/N-acetylneuraminic acid synthase C-terminal domain"/>
    <property type="match status" value="1"/>
</dbReference>
<dbReference type="InterPro" id="IPR006190">
    <property type="entry name" value="AFP_Neu5c_C"/>
</dbReference>
<dbReference type="InterPro" id="IPR036732">
    <property type="entry name" value="AFP_Neu5c_C_sf"/>
</dbReference>
<dbReference type="InterPro" id="IPR013785">
    <property type="entry name" value="Aldolase_TIM"/>
</dbReference>
<dbReference type="InterPro" id="IPR013132">
    <property type="entry name" value="Neu5Ac_N"/>
</dbReference>
<dbReference type="InterPro" id="IPR051690">
    <property type="entry name" value="Nonulosonic_Acid_Synth"/>
</dbReference>
<dbReference type="InterPro" id="IPR020030">
    <property type="entry name" value="Pseudaminic_synth_PseI"/>
</dbReference>
<dbReference type="InterPro" id="IPR013974">
    <property type="entry name" value="SAF"/>
</dbReference>
<dbReference type="NCBIfam" id="TIGR03586">
    <property type="entry name" value="PseI"/>
    <property type="match status" value="1"/>
</dbReference>
<dbReference type="PANTHER" id="PTHR42966">
    <property type="entry name" value="N-ACETYLNEURAMINATE SYNTHASE"/>
    <property type="match status" value="1"/>
</dbReference>
<dbReference type="PANTHER" id="PTHR42966:SF2">
    <property type="entry name" value="PSEUDAMINIC ACID SYNTHASE"/>
    <property type="match status" value="1"/>
</dbReference>
<dbReference type="Pfam" id="PF03102">
    <property type="entry name" value="NeuB"/>
    <property type="match status" value="1"/>
</dbReference>
<dbReference type="Pfam" id="PF08666">
    <property type="entry name" value="SAF"/>
    <property type="match status" value="1"/>
</dbReference>
<dbReference type="SMART" id="SM00858">
    <property type="entry name" value="SAF"/>
    <property type="match status" value="1"/>
</dbReference>
<dbReference type="SUPFAM" id="SSF51269">
    <property type="entry name" value="AFP III-like domain"/>
    <property type="match status" value="1"/>
</dbReference>
<dbReference type="SUPFAM" id="SSF51569">
    <property type="entry name" value="Aldolase"/>
    <property type="match status" value="1"/>
</dbReference>
<dbReference type="PROSITE" id="PS50844">
    <property type="entry name" value="AFP_LIKE"/>
    <property type="match status" value="1"/>
</dbReference>
<gene>
    <name type="primary">pseI</name>
    <name type="synonym">neuB3</name>
    <name type="ordered locus">CJJ81176_1334</name>
</gene>
<reference key="1">
    <citation type="journal article" date="2001" name="J. Biol. Chem.">
        <title>Identification of the carbohydrate moieties and glycosylation motifs in Campylobacter jejuni flagellin.</title>
        <authorList>
            <person name="Thibault P."/>
            <person name="Logan S.M."/>
            <person name="Kelly J.F."/>
            <person name="Brisson J.-R."/>
            <person name="Ewing C.P."/>
            <person name="Trust T.J."/>
            <person name="Guerry P."/>
        </authorList>
    </citation>
    <scope>NUCLEOTIDE SEQUENCE [GENOMIC DNA]</scope>
    <source>
        <strain>81-176</strain>
    </source>
</reference>
<reference key="2">
    <citation type="submission" date="2006-12" db="EMBL/GenBank/DDBJ databases">
        <authorList>
            <person name="Fouts D.E."/>
            <person name="Nelson K.E."/>
            <person name="Sebastian Y."/>
        </authorList>
    </citation>
    <scope>NUCLEOTIDE SEQUENCE [LARGE SCALE GENOMIC DNA]</scope>
    <source>
        <strain>81-176</strain>
    </source>
</reference>
<reference key="3">
    <citation type="journal article" date="2006" name="J. Biol. Chem.">
        <title>Functional characterization of the flagellar glycosylation locus in Campylobacter jejuni 81-176 using a focused metabolomics approach.</title>
        <authorList>
            <person name="McNally D.J."/>
            <person name="Hui J.P."/>
            <person name="Aubry A.J."/>
            <person name="Mui K.K."/>
            <person name="Guerry P."/>
            <person name="Brisson J.R."/>
            <person name="Logan S.M."/>
            <person name="Soo E.C."/>
        </authorList>
    </citation>
    <scope>FUNCTION</scope>
    <source>
        <strain>81-176</strain>
    </source>
</reference>
<proteinExistence type="inferred from homology"/>
<keyword id="KW-0479">Metal-binding</keyword>
<keyword id="KW-0808">Transferase</keyword>